<keyword id="KW-0472">Membrane</keyword>
<keyword id="KW-0489">Methyltransferase</keyword>
<keyword id="KW-0496">Mitochondrion</keyword>
<keyword id="KW-0999">Mitochondrion inner membrane</keyword>
<keyword id="KW-1185">Reference proteome</keyword>
<keyword id="KW-0949">S-adenosyl-L-methionine</keyword>
<keyword id="KW-0808">Transferase</keyword>
<keyword id="KW-0809">Transit peptide</keyword>
<keyword id="KW-0831">Ubiquinone biosynthesis</keyword>
<reference key="1">
    <citation type="journal article" date="2004" name="Genome Res.">
        <title>The status, quality, and expansion of the NIH full-length cDNA project: the Mammalian Gene Collection (MGC).</title>
        <authorList>
            <consortium name="The MGC Project Team"/>
        </authorList>
    </citation>
    <scope>NUCLEOTIDE SEQUENCE [LARGE SCALE MRNA]</scope>
    <source>
        <tissue>Liver</tissue>
    </source>
</reference>
<name>COQ5_RAT</name>
<proteinExistence type="evidence at transcript level"/>
<protein>
    <recommendedName>
        <fullName evidence="2">2-methoxy-6-polyprenyl-1,4-benzoquinol methylase, mitochondrial</fullName>
        <ecNumber evidence="2">2.1.1.201</ecNumber>
    </recommendedName>
    <alternativeName>
        <fullName evidence="2">Ubiquinone biosynthesis methyltransferase COQ5</fullName>
    </alternativeName>
</protein>
<evidence type="ECO:0000250" key="1">
    <source>
        <dbReference type="UniProtKB" id="Q5HYK3"/>
    </source>
</evidence>
<evidence type="ECO:0000255" key="2">
    <source>
        <dbReference type="HAMAP-Rule" id="MF_03191"/>
    </source>
</evidence>
<accession>Q4G064</accession>
<gene>
    <name evidence="2" type="primary">Coq5</name>
</gene>
<comment type="function">
    <text evidence="1">Methyltransferase required for the conversion of 2-decaprenyl-6-methoxy-1,4-benzoquinol (DDMQH2) to 2-decaprenyl-3-methyl-6-methoxy-1,4-benzoquinol (DMQH2).</text>
</comment>
<comment type="catalytic activity">
    <reaction evidence="2">
        <text>2-methoxy-6-(all-trans-decaprenyl)benzene-1,4-diol + S-adenosyl-L-methionine = 5-methoxy-2-methyl-3-(all-trans-decaprenyl)benzene-1,4-diol + S-adenosyl-L-homocysteine + H(+)</text>
        <dbReference type="Rhea" id="RHEA:44764"/>
        <dbReference type="ChEBI" id="CHEBI:15378"/>
        <dbReference type="ChEBI" id="CHEBI:57856"/>
        <dbReference type="ChEBI" id="CHEBI:59789"/>
        <dbReference type="ChEBI" id="CHEBI:64180"/>
        <dbReference type="ChEBI" id="CHEBI:64181"/>
        <dbReference type="EC" id="2.1.1.201"/>
    </reaction>
</comment>
<comment type="pathway">
    <text evidence="2">Cofactor biosynthesis; ubiquinone biosynthesis.</text>
</comment>
<comment type="subunit">
    <text evidence="1 2">Component of a multi-subunit COQ enzyme complex, composed of at least COQ3, COQ4, COQ5, COQ6, COQ7 and COQ9. Interacts with PYURF; the interaction is direct, stabilizes COQ5 protein and associates PYURF with COQ enzyme complex (By similarity).</text>
</comment>
<comment type="subcellular location">
    <subcellularLocation>
        <location evidence="2">Mitochondrion inner membrane</location>
        <topology evidence="2">Peripheral membrane protein</topology>
        <orientation evidence="2">Matrix side</orientation>
    </subcellularLocation>
</comment>
<comment type="similarity">
    <text evidence="2">Belongs to the class I-like SAM-binding methyltransferase superfamily. MenG/UbiE family.</text>
</comment>
<sequence length="327" mass="37301">MAAPRSCVLWSYCGHGWSRLAGDCRLPGFRRSWLGATLSARSLSQEKRAAETHFGFETVSEKEKGGKVYQVFQSVARKYDLMNDMMSLGIHRAWKDLLIRKMHPLPGTQLLDVAGGTGDIAFRFLSYVQTQHERKQRRQLRTRQNLSWEEIARKYQSKEDPLGGSLVMVCDINREMLKVGKQKALARGHTAGLAWVLGDAEELPFDDDRFDVYTIAFGIRNVTHIDRALQEAHRVLKPGGRFLCLEFSQVNDPLISRLYDLYSFQVIPVIGEVIAGDWKSYQYLVESIRKFPNQEEFKDMIEDAGFQKVTYESLTSGIVAIHSGFKL</sequence>
<dbReference type="EC" id="2.1.1.201" evidence="2"/>
<dbReference type="EMBL" id="BC098719">
    <property type="protein sequence ID" value="AAH98719.1"/>
    <property type="molecule type" value="mRNA"/>
</dbReference>
<dbReference type="RefSeq" id="NP_001034111.1">
    <property type="nucleotide sequence ID" value="NM_001039022.1"/>
</dbReference>
<dbReference type="SMR" id="Q4G064"/>
<dbReference type="BioGRID" id="257899">
    <property type="interactions" value="1"/>
</dbReference>
<dbReference type="FunCoup" id="Q4G064">
    <property type="interactions" value="2358"/>
</dbReference>
<dbReference type="STRING" id="10116.ENSRNOP00000001547"/>
<dbReference type="iPTMnet" id="Q4G064"/>
<dbReference type="PhosphoSitePlus" id="Q4G064"/>
<dbReference type="PaxDb" id="10116-ENSRNOP00000001547"/>
<dbReference type="Ensembl" id="ENSRNOT00000001546.7">
    <property type="protein sequence ID" value="ENSRNOP00000001547.3"/>
    <property type="gene ID" value="ENSRNOG00000001171.7"/>
</dbReference>
<dbReference type="GeneID" id="304542"/>
<dbReference type="KEGG" id="rno:304542"/>
<dbReference type="UCSC" id="RGD:1310857">
    <property type="organism name" value="rat"/>
</dbReference>
<dbReference type="AGR" id="RGD:1310857"/>
<dbReference type="CTD" id="84274"/>
<dbReference type="RGD" id="1310857">
    <property type="gene designation" value="Coq5"/>
</dbReference>
<dbReference type="eggNOG" id="KOG1540">
    <property type="taxonomic scope" value="Eukaryota"/>
</dbReference>
<dbReference type="GeneTree" id="ENSGT00390000001654"/>
<dbReference type="HOGENOM" id="CLU_037990_0_1_1"/>
<dbReference type="InParanoid" id="Q4G064"/>
<dbReference type="OMA" id="MNDVMSM"/>
<dbReference type="OrthoDB" id="6329284at2759"/>
<dbReference type="PhylomeDB" id="Q4G064"/>
<dbReference type="TreeFam" id="TF106217"/>
<dbReference type="BRENDA" id="2.1.1.201">
    <property type="organism ID" value="5301"/>
</dbReference>
<dbReference type="Reactome" id="R-RNO-2142789">
    <property type="pathway name" value="Ubiquinol biosynthesis"/>
</dbReference>
<dbReference type="UniPathway" id="UPA00232"/>
<dbReference type="PRO" id="PR:Q4G064"/>
<dbReference type="Proteomes" id="UP000002494">
    <property type="component" value="Chromosome 12"/>
</dbReference>
<dbReference type="Bgee" id="ENSRNOG00000001171">
    <property type="expression patterns" value="Expressed in heart and 20 other cell types or tissues"/>
</dbReference>
<dbReference type="GO" id="GO:0031314">
    <property type="term" value="C:extrinsic component of mitochondrial inner membrane"/>
    <property type="evidence" value="ECO:0007669"/>
    <property type="project" value="UniProtKB-UniRule"/>
</dbReference>
<dbReference type="GO" id="GO:0005743">
    <property type="term" value="C:mitochondrial inner membrane"/>
    <property type="evidence" value="ECO:0000266"/>
    <property type="project" value="RGD"/>
</dbReference>
<dbReference type="GO" id="GO:0005759">
    <property type="term" value="C:mitochondrial matrix"/>
    <property type="evidence" value="ECO:0000266"/>
    <property type="project" value="RGD"/>
</dbReference>
<dbReference type="GO" id="GO:0032991">
    <property type="term" value="C:protein-containing complex"/>
    <property type="evidence" value="ECO:0000266"/>
    <property type="project" value="RGD"/>
</dbReference>
<dbReference type="GO" id="GO:0110142">
    <property type="term" value="C:ubiquinone biosynthesis complex"/>
    <property type="evidence" value="ECO:0000266"/>
    <property type="project" value="RGD"/>
</dbReference>
<dbReference type="GO" id="GO:0008425">
    <property type="term" value="F:2-methoxy-6-polyprenyl-1,4-benzoquinol methyltransferase activity"/>
    <property type="evidence" value="ECO:0000250"/>
    <property type="project" value="UniProtKB"/>
</dbReference>
<dbReference type="GO" id="GO:0032259">
    <property type="term" value="P:methylation"/>
    <property type="evidence" value="ECO:0000266"/>
    <property type="project" value="RGD"/>
</dbReference>
<dbReference type="GO" id="GO:0006744">
    <property type="term" value="P:ubiquinone biosynthetic process"/>
    <property type="evidence" value="ECO:0000250"/>
    <property type="project" value="UniProtKB"/>
</dbReference>
<dbReference type="CDD" id="cd02440">
    <property type="entry name" value="AdoMet_MTases"/>
    <property type="match status" value="1"/>
</dbReference>
<dbReference type="FunFam" id="3.40.50.150:FF:000064">
    <property type="entry name" value="2-methoxy-6-polyprenyl-1,4-benzoquinol methylase, mitochondrial"/>
    <property type="match status" value="1"/>
</dbReference>
<dbReference type="Gene3D" id="3.40.50.150">
    <property type="entry name" value="Vaccinia Virus protein VP39"/>
    <property type="match status" value="1"/>
</dbReference>
<dbReference type="HAMAP" id="MF_01813">
    <property type="entry name" value="MenG_UbiE_methyltr"/>
    <property type="match status" value="1"/>
</dbReference>
<dbReference type="InterPro" id="IPR029063">
    <property type="entry name" value="SAM-dependent_MTases_sf"/>
</dbReference>
<dbReference type="InterPro" id="IPR004033">
    <property type="entry name" value="UbiE/COQ5_MeTrFase"/>
</dbReference>
<dbReference type="InterPro" id="IPR023576">
    <property type="entry name" value="UbiE/COQ5_MeTrFase_CS"/>
</dbReference>
<dbReference type="NCBIfam" id="TIGR01934">
    <property type="entry name" value="MenG_MenH_UbiE"/>
    <property type="match status" value="1"/>
</dbReference>
<dbReference type="PANTHER" id="PTHR43591:SF24">
    <property type="entry name" value="2-METHOXY-6-POLYPRENYL-1,4-BENZOQUINOL METHYLASE, MITOCHONDRIAL"/>
    <property type="match status" value="1"/>
</dbReference>
<dbReference type="PANTHER" id="PTHR43591">
    <property type="entry name" value="METHYLTRANSFERASE"/>
    <property type="match status" value="1"/>
</dbReference>
<dbReference type="Pfam" id="PF01209">
    <property type="entry name" value="Ubie_methyltran"/>
    <property type="match status" value="1"/>
</dbReference>
<dbReference type="SUPFAM" id="SSF53335">
    <property type="entry name" value="S-adenosyl-L-methionine-dependent methyltransferases"/>
    <property type="match status" value="1"/>
</dbReference>
<dbReference type="PROSITE" id="PS51608">
    <property type="entry name" value="SAM_MT_UBIE"/>
    <property type="match status" value="1"/>
</dbReference>
<dbReference type="PROSITE" id="PS01183">
    <property type="entry name" value="UBIE_1"/>
    <property type="match status" value="1"/>
</dbReference>
<dbReference type="PROSITE" id="PS01184">
    <property type="entry name" value="UBIE_2"/>
    <property type="match status" value="1"/>
</dbReference>
<organism>
    <name type="scientific">Rattus norvegicus</name>
    <name type="common">Rat</name>
    <dbReference type="NCBI Taxonomy" id="10116"/>
    <lineage>
        <taxon>Eukaryota</taxon>
        <taxon>Metazoa</taxon>
        <taxon>Chordata</taxon>
        <taxon>Craniata</taxon>
        <taxon>Vertebrata</taxon>
        <taxon>Euteleostomi</taxon>
        <taxon>Mammalia</taxon>
        <taxon>Eutheria</taxon>
        <taxon>Euarchontoglires</taxon>
        <taxon>Glires</taxon>
        <taxon>Rodentia</taxon>
        <taxon>Myomorpha</taxon>
        <taxon>Muroidea</taxon>
        <taxon>Muridae</taxon>
        <taxon>Murinae</taxon>
        <taxon>Rattus</taxon>
    </lineage>
</organism>
<feature type="transit peptide" description="Mitochondrion" evidence="2">
    <location>
        <begin position="1"/>
        <end position="49"/>
    </location>
</feature>
<feature type="chain" id="PRO_0000228631" description="2-methoxy-6-polyprenyl-1,4-benzoquinol methylase, mitochondrial">
    <location>
        <begin position="50"/>
        <end position="327"/>
    </location>
</feature>
<feature type="binding site" evidence="2">
    <location>
        <position position="117"/>
    </location>
    <ligand>
        <name>S-adenosyl-L-methionine</name>
        <dbReference type="ChEBI" id="CHEBI:59789"/>
    </ligand>
</feature>
<feature type="binding site" evidence="2">
    <location>
        <position position="171"/>
    </location>
    <ligand>
        <name>S-adenosyl-L-methionine</name>
        <dbReference type="ChEBI" id="CHEBI:59789"/>
    </ligand>
</feature>
<feature type="binding site" evidence="2">
    <location>
        <begin position="199"/>
        <end position="200"/>
    </location>
    <ligand>
        <name>S-adenosyl-L-methionine</name>
        <dbReference type="ChEBI" id="CHEBI:59789"/>
    </ligand>
</feature>